<accession>P73448</accession>
<sequence>MDSPAILPTTRTLCPYCGVGCGLEAVASPQKSVVDAGHAHKIRGDRQHPSSQGMVCVKGATVMESMDKQRLLYPMFRSSLDQPWQQISWEAALEIVVDKIQQVKQTLGVSGLCMYASGQMQTEDYYVAQKLFKGCLGTNNFDTNSRLCMSSAVSAYSLSFGSDGPPCCYEDLEITDCAFLIGTNTADCHPIIFNRLRKHHKQNPHVKLIVVDPRCTATAEVADLHLAINPGSDITLLHGIAYLLKKWNLIDQKFIDNHTQDFEQYCQVIDHYPPEKVTQICGISLEQLETAAHYWGNAKTVLSLWSMGMNQSFQGTAKGRCLINLHLLTGQIGKPGSGPFSLTGQPNAMGGREAGGLSHLLPGYRSIKNPQHRQEVEQLWQISPGRINPEPGLSAWEMFMGLENQQVGFLWIVATNPVVSMPDLERVKKALQQSTFTIHQDAYSPTETAEYAHLLLPAAQWSEKTGTMTNSERRVTLSPAFRSPPGEARPDWEIFAEVGRRLGFENQFNFVDSAAVHREYVQLTAERLCDQSGVSYEKLQKLGPLQWPCRQSDQESQLLSTKRLYTDYKFCTENGRANFCLDHSRGLAEPVDPNYPFVLTNGRLYGHWHTQTRTGHIEKIKKMHPKPILEMHPKDAEKLGIKSQDLVAIKSRRGSAQLEVLVTRAIAPGTVFMPMHWGFLWDDNAEVNSLTHATACPISKQPELKACAVNITPV</sequence>
<reference key="1">
    <citation type="journal article" date="1996" name="DNA Res.">
        <title>Sequence analysis of the genome of the unicellular cyanobacterium Synechocystis sp. strain PCC6803. II. Sequence determination of the entire genome and assignment of potential protein-coding regions.</title>
        <authorList>
            <person name="Kaneko T."/>
            <person name="Sato S."/>
            <person name="Kotani H."/>
            <person name="Tanaka A."/>
            <person name="Asamizu E."/>
            <person name="Nakamura Y."/>
            <person name="Miyajima N."/>
            <person name="Hirosawa M."/>
            <person name="Sugiura M."/>
            <person name="Sasamoto S."/>
            <person name="Kimura T."/>
            <person name="Hosouchi T."/>
            <person name="Matsuno A."/>
            <person name="Muraki A."/>
            <person name="Nakazaki N."/>
            <person name="Naruo K."/>
            <person name="Okumura S."/>
            <person name="Shimpo S."/>
            <person name="Takeuchi C."/>
            <person name="Wada T."/>
            <person name="Watanabe A."/>
            <person name="Yamada M."/>
            <person name="Yasuda M."/>
            <person name="Tabata S."/>
        </authorList>
    </citation>
    <scope>NUCLEOTIDE SEQUENCE [LARGE SCALE GENOMIC DNA]</scope>
    <source>
        <strain>ATCC 27184 / PCC 6803 / Kazusa</strain>
    </source>
</reference>
<protein>
    <recommendedName>
        <fullName>Nitrate reductase</fullName>
        <ecNumber>1.7.5.1</ecNumber>
    </recommendedName>
</protein>
<proteinExistence type="inferred from homology"/>
<comment type="function">
    <text>Nitrate reductase is a key enzyme involved in the first step of nitrate assimilation in plants, fungi and bacteria.</text>
</comment>
<comment type="catalytic activity">
    <reaction>
        <text>nitrate + a quinol = a quinone + nitrite + H2O</text>
        <dbReference type="Rhea" id="RHEA:56144"/>
        <dbReference type="ChEBI" id="CHEBI:15377"/>
        <dbReference type="ChEBI" id="CHEBI:16301"/>
        <dbReference type="ChEBI" id="CHEBI:17632"/>
        <dbReference type="ChEBI" id="CHEBI:24646"/>
        <dbReference type="ChEBI" id="CHEBI:132124"/>
        <dbReference type="EC" id="1.7.5.1"/>
    </reaction>
</comment>
<comment type="cofactor">
    <cofactor evidence="3">
        <name>[4Fe-4S] cluster</name>
        <dbReference type="ChEBI" id="CHEBI:49883"/>
    </cofactor>
    <text evidence="3">Binds 1 [4Fe-4S] cluster.</text>
</comment>
<comment type="cofactor">
    <cofactor evidence="1">
        <name>Mo-bis(molybdopterin guanine dinucleotide)</name>
        <dbReference type="ChEBI" id="CHEBI:60539"/>
    </cofactor>
    <text evidence="1">Binds 1 molybdenum-bis(molybdopterin guanine dinucleotide) (Mo-bis-MGD) cofactor per subunit.</text>
</comment>
<comment type="pathway">
    <text>Nitrogen metabolism; nitrate reduction (denitrification); dinitrogen from nitrate: step 1/4.</text>
</comment>
<comment type="similarity">
    <text evidence="3">Belongs to the prokaryotic molybdopterin-containing oxidoreductase family. NasA/NapA/NarB subfamily.</text>
</comment>
<gene>
    <name type="primary">narB</name>
    <name type="ordered locus">sll1454</name>
</gene>
<keyword id="KW-0004">4Fe-4S</keyword>
<keyword id="KW-0408">Iron</keyword>
<keyword id="KW-0411">Iron-sulfur</keyword>
<keyword id="KW-0479">Metal-binding</keyword>
<keyword id="KW-0500">Molybdenum</keyword>
<keyword id="KW-0534">Nitrate assimilation</keyword>
<keyword id="KW-0560">Oxidoreductase</keyword>
<keyword id="KW-1185">Reference proteome</keyword>
<evidence type="ECO:0000250" key="1"/>
<evidence type="ECO:0000255" key="2">
    <source>
        <dbReference type="PROSITE-ProRule" id="PRU01004"/>
    </source>
</evidence>
<evidence type="ECO:0000305" key="3"/>
<name>NARB_SYNY3</name>
<organism>
    <name type="scientific">Synechocystis sp. (strain ATCC 27184 / PCC 6803 / Kazusa)</name>
    <dbReference type="NCBI Taxonomy" id="1111708"/>
    <lineage>
        <taxon>Bacteria</taxon>
        <taxon>Bacillati</taxon>
        <taxon>Cyanobacteriota</taxon>
        <taxon>Cyanophyceae</taxon>
        <taxon>Synechococcales</taxon>
        <taxon>Merismopediaceae</taxon>
        <taxon>Synechocystis</taxon>
    </lineage>
</organism>
<dbReference type="EC" id="1.7.5.1"/>
<dbReference type="EMBL" id="BA000022">
    <property type="protein sequence ID" value="BAA17488.1"/>
    <property type="molecule type" value="Genomic_DNA"/>
</dbReference>
<dbReference type="PIR" id="S77385">
    <property type="entry name" value="S77385"/>
</dbReference>
<dbReference type="SMR" id="P73448"/>
<dbReference type="FunCoup" id="P73448">
    <property type="interactions" value="398"/>
</dbReference>
<dbReference type="IntAct" id="P73448">
    <property type="interactions" value="7"/>
</dbReference>
<dbReference type="STRING" id="1148.gene:10498353"/>
<dbReference type="PaxDb" id="1148-1652567"/>
<dbReference type="EnsemblBacteria" id="BAA17488">
    <property type="protein sequence ID" value="BAA17488"/>
    <property type="gene ID" value="BAA17488"/>
</dbReference>
<dbReference type="KEGG" id="syn:sll1454"/>
<dbReference type="eggNOG" id="COG0243">
    <property type="taxonomic scope" value="Bacteria"/>
</dbReference>
<dbReference type="InParanoid" id="P73448"/>
<dbReference type="PhylomeDB" id="P73448"/>
<dbReference type="UniPathway" id="UPA00652">
    <property type="reaction ID" value="UER00706"/>
</dbReference>
<dbReference type="Proteomes" id="UP000001425">
    <property type="component" value="Chromosome"/>
</dbReference>
<dbReference type="GO" id="GO:0009326">
    <property type="term" value="C:formate dehydrogenase complex"/>
    <property type="evidence" value="ECO:0000318"/>
    <property type="project" value="GO_Central"/>
</dbReference>
<dbReference type="GO" id="GO:0051539">
    <property type="term" value="F:4 iron, 4 sulfur cluster binding"/>
    <property type="evidence" value="ECO:0007669"/>
    <property type="project" value="UniProtKB-KW"/>
</dbReference>
<dbReference type="GO" id="GO:0009055">
    <property type="term" value="F:electron transfer activity"/>
    <property type="evidence" value="ECO:0000318"/>
    <property type="project" value="GO_Central"/>
</dbReference>
<dbReference type="GO" id="GO:0036397">
    <property type="term" value="F:formate dehydrogenase (quinone) activity"/>
    <property type="evidence" value="ECO:0000318"/>
    <property type="project" value="GO_Central"/>
</dbReference>
<dbReference type="GO" id="GO:0046872">
    <property type="term" value="F:metal ion binding"/>
    <property type="evidence" value="ECO:0007669"/>
    <property type="project" value="UniProtKB-KW"/>
</dbReference>
<dbReference type="GO" id="GO:0043546">
    <property type="term" value="F:molybdopterin cofactor binding"/>
    <property type="evidence" value="ECO:0007669"/>
    <property type="project" value="InterPro"/>
</dbReference>
<dbReference type="GO" id="GO:0160182">
    <property type="term" value="F:nitrate reductase (quinone) activity"/>
    <property type="evidence" value="ECO:0007669"/>
    <property type="project" value="UniProtKB-EC"/>
</dbReference>
<dbReference type="GO" id="GO:0009061">
    <property type="term" value="P:anaerobic respiration"/>
    <property type="evidence" value="ECO:0000318"/>
    <property type="project" value="GO_Central"/>
</dbReference>
<dbReference type="GO" id="GO:0019333">
    <property type="term" value="P:denitrification pathway"/>
    <property type="evidence" value="ECO:0007669"/>
    <property type="project" value="UniProtKB-UniPathway"/>
</dbReference>
<dbReference type="GO" id="GO:0015944">
    <property type="term" value="P:formate oxidation"/>
    <property type="evidence" value="ECO:0000318"/>
    <property type="project" value="GO_Central"/>
</dbReference>
<dbReference type="GO" id="GO:0042128">
    <property type="term" value="P:nitrate assimilation"/>
    <property type="evidence" value="ECO:0007669"/>
    <property type="project" value="UniProtKB-KW"/>
</dbReference>
<dbReference type="CDD" id="cd02791">
    <property type="entry name" value="MopB_CT_Nitrate-R-NapA-like"/>
    <property type="match status" value="1"/>
</dbReference>
<dbReference type="CDD" id="cd02754">
    <property type="entry name" value="MopB_Nitrate-R-NapA-like"/>
    <property type="match status" value="1"/>
</dbReference>
<dbReference type="FunFam" id="2.20.25.90:FF:000006">
    <property type="entry name" value="Formate dehydrogenase alpha subunit"/>
    <property type="match status" value="1"/>
</dbReference>
<dbReference type="FunFam" id="3.40.228.10:FF:000002">
    <property type="entry name" value="Formate dehydrogenase subunit alpha"/>
    <property type="match status" value="1"/>
</dbReference>
<dbReference type="FunFam" id="2.40.40.20:FF:000005">
    <property type="entry name" value="Periplasmic nitrate reductase"/>
    <property type="match status" value="1"/>
</dbReference>
<dbReference type="Gene3D" id="2.40.40.20">
    <property type="match status" value="1"/>
</dbReference>
<dbReference type="Gene3D" id="3.40.50.740">
    <property type="match status" value="1"/>
</dbReference>
<dbReference type="Gene3D" id="2.20.25.90">
    <property type="entry name" value="ADC-like domains"/>
    <property type="match status" value="1"/>
</dbReference>
<dbReference type="Gene3D" id="3.40.228.10">
    <property type="entry name" value="Dimethylsulfoxide Reductase, domain 2"/>
    <property type="match status" value="1"/>
</dbReference>
<dbReference type="InterPro" id="IPR009010">
    <property type="entry name" value="Asp_de-COase-like_dom_sf"/>
</dbReference>
<dbReference type="InterPro" id="IPR041957">
    <property type="entry name" value="CT_Nitrate-R-NapA-like"/>
</dbReference>
<dbReference type="InterPro" id="IPR006657">
    <property type="entry name" value="MoPterin_dinucl-bd_dom"/>
</dbReference>
<dbReference type="InterPro" id="IPR006656">
    <property type="entry name" value="Mopterin_OxRdtase"/>
</dbReference>
<dbReference type="InterPro" id="IPR006963">
    <property type="entry name" value="Mopterin_OxRdtase_4Fe-4S_dom"/>
</dbReference>
<dbReference type="InterPro" id="IPR027467">
    <property type="entry name" value="MopterinOxRdtase_cofactor_BS"/>
</dbReference>
<dbReference type="InterPro" id="IPR050123">
    <property type="entry name" value="Prok_molybdopt-oxidoreductase"/>
</dbReference>
<dbReference type="PANTHER" id="PTHR43105:SF9">
    <property type="entry name" value="NADPH-FE(3+) OXIDOREDUCTASE SUBUNIT ALPHA"/>
    <property type="match status" value="1"/>
</dbReference>
<dbReference type="PANTHER" id="PTHR43105">
    <property type="entry name" value="RESPIRATORY NITRATE REDUCTASE"/>
    <property type="match status" value="1"/>
</dbReference>
<dbReference type="Pfam" id="PF04879">
    <property type="entry name" value="Molybdop_Fe4S4"/>
    <property type="match status" value="1"/>
</dbReference>
<dbReference type="Pfam" id="PF00384">
    <property type="entry name" value="Molybdopterin"/>
    <property type="match status" value="1"/>
</dbReference>
<dbReference type="Pfam" id="PF01568">
    <property type="entry name" value="Molydop_binding"/>
    <property type="match status" value="1"/>
</dbReference>
<dbReference type="PIRSF" id="PIRSF000144">
    <property type="entry name" value="CbbBc"/>
    <property type="match status" value="1"/>
</dbReference>
<dbReference type="SMART" id="SM00926">
    <property type="entry name" value="Molybdop_Fe4S4"/>
    <property type="match status" value="1"/>
</dbReference>
<dbReference type="SUPFAM" id="SSF50692">
    <property type="entry name" value="ADC-like"/>
    <property type="match status" value="1"/>
</dbReference>
<dbReference type="SUPFAM" id="SSF53706">
    <property type="entry name" value="Formate dehydrogenase/DMSO reductase, domains 1-3"/>
    <property type="match status" value="1"/>
</dbReference>
<dbReference type="PROSITE" id="PS51669">
    <property type="entry name" value="4FE4S_MOW_BIS_MGD"/>
    <property type="match status" value="1"/>
</dbReference>
<dbReference type="PROSITE" id="PS00551">
    <property type="entry name" value="MOLYBDOPTERIN_PROK_1"/>
    <property type="match status" value="1"/>
</dbReference>
<feature type="chain" id="PRO_0000063238" description="Nitrate reductase">
    <location>
        <begin position="1"/>
        <end position="714"/>
    </location>
</feature>
<feature type="domain" description="4Fe-4S Mo/W bis-MGD-type" evidence="2">
    <location>
        <begin position="7"/>
        <end position="70"/>
    </location>
</feature>
<feature type="binding site" evidence="2">
    <location>
        <position position="14"/>
    </location>
    <ligand>
        <name>[4Fe-4S] cluster</name>
        <dbReference type="ChEBI" id="CHEBI:49883"/>
    </ligand>
</feature>
<feature type="binding site" evidence="2">
    <location>
        <position position="17"/>
    </location>
    <ligand>
        <name>[4Fe-4S] cluster</name>
        <dbReference type="ChEBI" id="CHEBI:49883"/>
    </ligand>
</feature>
<feature type="binding site" evidence="2">
    <location>
        <position position="21"/>
    </location>
    <ligand>
        <name>[4Fe-4S] cluster</name>
        <dbReference type="ChEBI" id="CHEBI:49883"/>
    </ligand>
</feature>
<feature type="binding site" evidence="2">
    <location>
        <position position="56"/>
    </location>
    <ligand>
        <name>[4Fe-4S] cluster</name>
        <dbReference type="ChEBI" id="CHEBI:49883"/>
    </ligand>
</feature>